<proteinExistence type="inferred from homology"/>
<reference key="1">
    <citation type="journal article" date="2008" name="Proc. Natl. Acad. Sci. U.S.A.">
        <title>Nitrogen fixation island and rhizosphere competence traits in the genome of root-associated Pseudomonas stutzeri A1501.</title>
        <authorList>
            <person name="Yan Y."/>
            <person name="Yang J."/>
            <person name="Dou Y."/>
            <person name="Chen M."/>
            <person name="Ping S."/>
            <person name="Peng J."/>
            <person name="Lu W."/>
            <person name="Zhang W."/>
            <person name="Yao Z."/>
            <person name="Li H."/>
            <person name="Liu W."/>
            <person name="He S."/>
            <person name="Geng L."/>
            <person name="Zhang X."/>
            <person name="Yang F."/>
            <person name="Yu H."/>
            <person name="Zhan Y."/>
            <person name="Li D."/>
            <person name="Lin Z."/>
            <person name="Wang Y."/>
            <person name="Elmerich C."/>
            <person name="Lin M."/>
            <person name="Jin Q."/>
        </authorList>
    </citation>
    <scope>NUCLEOTIDE SEQUENCE [LARGE SCALE GENOMIC DNA]</scope>
    <source>
        <strain>A1501</strain>
    </source>
</reference>
<protein>
    <recommendedName>
        <fullName evidence="1">PqqA binding protein</fullName>
    </recommendedName>
    <alternativeName>
        <fullName evidence="1">Coenzyme PQQ synthesis protein D</fullName>
    </alternativeName>
    <alternativeName>
        <fullName evidence="1">Pyrroloquinoline quinone biosynthesis protein D</fullName>
    </alternativeName>
</protein>
<organism>
    <name type="scientific">Stutzerimonas stutzeri (strain A1501)</name>
    <name type="common">Pseudomonas stutzeri</name>
    <dbReference type="NCBI Taxonomy" id="379731"/>
    <lineage>
        <taxon>Bacteria</taxon>
        <taxon>Pseudomonadati</taxon>
        <taxon>Pseudomonadota</taxon>
        <taxon>Gammaproteobacteria</taxon>
        <taxon>Pseudomonadales</taxon>
        <taxon>Pseudomonadaceae</taxon>
        <taxon>Stutzerimonas</taxon>
    </lineage>
</organism>
<name>PQQD_STUS1</name>
<keyword id="KW-0884">PQQ biosynthesis</keyword>
<keyword id="KW-1185">Reference proteome</keyword>
<accession>A4VL92</accession>
<comment type="function">
    <text evidence="1">Functions as a PqqA binding protein and presents PqqA to PqqE, in the pyrroloquinoline quinone (PQQ) biosynthetic pathway.</text>
</comment>
<comment type="pathway">
    <text evidence="1">Cofactor biosynthesis; pyrroloquinoline quinone biosynthesis.</text>
</comment>
<comment type="subunit">
    <text evidence="1">Monomer. Interacts with PqqE.</text>
</comment>
<comment type="similarity">
    <text evidence="1">Belongs to the PqqD family.</text>
</comment>
<gene>
    <name evidence="1" type="primary">pqqD</name>
    <name type="ordered locus">PST_2075</name>
</gene>
<feature type="chain" id="PRO_1000061690" description="PqqA binding protein">
    <location>
        <begin position="1"/>
        <end position="92"/>
    </location>
</feature>
<dbReference type="EMBL" id="CP000304">
    <property type="protein sequence ID" value="ABP79743.1"/>
    <property type="molecule type" value="Genomic_DNA"/>
</dbReference>
<dbReference type="RefSeq" id="WP_011913210.1">
    <property type="nucleotide sequence ID" value="NC_009434.1"/>
</dbReference>
<dbReference type="SMR" id="A4VL92"/>
<dbReference type="GeneID" id="66821436"/>
<dbReference type="KEGG" id="psa:PST_2075"/>
<dbReference type="eggNOG" id="ENOG5032Z81">
    <property type="taxonomic scope" value="Bacteria"/>
</dbReference>
<dbReference type="HOGENOM" id="CLU_163864_2_1_6"/>
<dbReference type="UniPathway" id="UPA00539"/>
<dbReference type="Proteomes" id="UP000000233">
    <property type="component" value="Chromosome"/>
</dbReference>
<dbReference type="GO" id="GO:0048038">
    <property type="term" value="F:quinone binding"/>
    <property type="evidence" value="ECO:0007669"/>
    <property type="project" value="InterPro"/>
</dbReference>
<dbReference type="GO" id="GO:0018189">
    <property type="term" value="P:pyrroloquinoline quinone biosynthetic process"/>
    <property type="evidence" value="ECO:0007669"/>
    <property type="project" value="UniProtKB-UniRule"/>
</dbReference>
<dbReference type="Gene3D" id="1.10.10.1150">
    <property type="entry name" value="Coenzyme PQQ synthesis protein D (PqqD)"/>
    <property type="match status" value="1"/>
</dbReference>
<dbReference type="HAMAP" id="MF_00655">
    <property type="entry name" value="PQQ_syn_PqqD"/>
    <property type="match status" value="1"/>
</dbReference>
<dbReference type="InterPro" id="IPR008792">
    <property type="entry name" value="PQQD"/>
</dbReference>
<dbReference type="InterPro" id="IPR022479">
    <property type="entry name" value="PqqD_bac"/>
</dbReference>
<dbReference type="InterPro" id="IPR041881">
    <property type="entry name" value="PqqD_sf"/>
</dbReference>
<dbReference type="NCBIfam" id="TIGR03859">
    <property type="entry name" value="PQQ_PqqD"/>
    <property type="match status" value="1"/>
</dbReference>
<dbReference type="NCBIfam" id="NF002535">
    <property type="entry name" value="PRK02079.1"/>
    <property type="match status" value="1"/>
</dbReference>
<dbReference type="Pfam" id="PF05402">
    <property type="entry name" value="PqqD"/>
    <property type="match status" value="1"/>
</dbReference>
<evidence type="ECO:0000255" key="1">
    <source>
        <dbReference type="HAMAP-Rule" id="MF_00655"/>
    </source>
</evidence>
<sequence>MSEIQLTQVPSFRRGFRFQWEPAQNCHVLLYPEGMIKLNESAAAVLTEVDGTRTVGAIVADLQARYPEAEGIQEDIVAFLEVAVERFWIELR</sequence>